<comment type="function">
    <text evidence="1">Pyrophosphatase that catalyzes the hydrolysis of nucleoside triphosphates to their monophosphate derivatives, with a high preference for the non-canonical purine nucleotides XTP (xanthosine triphosphate), dITP (deoxyinosine triphosphate) and ITP. Seems to function as a house-cleaning enzyme that removes non-canonical purine nucleotides from the nucleotide pool, thus preventing their incorporation into DNA/RNA and avoiding chromosomal lesions.</text>
</comment>
<comment type="catalytic activity">
    <reaction evidence="1">
        <text>XTP + H2O = XMP + diphosphate + H(+)</text>
        <dbReference type="Rhea" id="RHEA:28610"/>
        <dbReference type="ChEBI" id="CHEBI:15377"/>
        <dbReference type="ChEBI" id="CHEBI:15378"/>
        <dbReference type="ChEBI" id="CHEBI:33019"/>
        <dbReference type="ChEBI" id="CHEBI:57464"/>
        <dbReference type="ChEBI" id="CHEBI:61314"/>
        <dbReference type="EC" id="3.6.1.66"/>
    </reaction>
</comment>
<comment type="catalytic activity">
    <reaction evidence="1">
        <text>dITP + H2O = dIMP + diphosphate + H(+)</text>
        <dbReference type="Rhea" id="RHEA:28342"/>
        <dbReference type="ChEBI" id="CHEBI:15377"/>
        <dbReference type="ChEBI" id="CHEBI:15378"/>
        <dbReference type="ChEBI" id="CHEBI:33019"/>
        <dbReference type="ChEBI" id="CHEBI:61194"/>
        <dbReference type="ChEBI" id="CHEBI:61382"/>
        <dbReference type="EC" id="3.6.1.66"/>
    </reaction>
</comment>
<comment type="catalytic activity">
    <reaction evidence="1">
        <text>ITP + H2O = IMP + diphosphate + H(+)</text>
        <dbReference type="Rhea" id="RHEA:29399"/>
        <dbReference type="ChEBI" id="CHEBI:15377"/>
        <dbReference type="ChEBI" id="CHEBI:15378"/>
        <dbReference type="ChEBI" id="CHEBI:33019"/>
        <dbReference type="ChEBI" id="CHEBI:58053"/>
        <dbReference type="ChEBI" id="CHEBI:61402"/>
        <dbReference type="EC" id="3.6.1.66"/>
    </reaction>
</comment>
<comment type="cofactor">
    <cofactor evidence="1">
        <name>Mg(2+)</name>
        <dbReference type="ChEBI" id="CHEBI:18420"/>
    </cofactor>
    <text evidence="1">Binds 1 Mg(2+) ion per subunit.</text>
</comment>
<comment type="subunit">
    <text evidence="1">Homodimer.</text>
</comment>
<comment type="similarity">
    <text evidence="1">Belongs to the HAM1 NTPase family.</text>
</comment>
<feature type="chain" id="PRO_0000178250" description="dITP/XTP pyrophosphatase">
    <location>
        <begin position="1"/>
        <end position="195"/>
    </location>
</feature>
<feature type="active site" description="Proton acceptor" evidence="1">
    <location>
        <position position="67"/>
    </location>
</feature>
<feature type="binding site" evidence="1">
    <location>
        <begin position="8"/>
        <end position="13"/>
    </location>
    <ligand>
        <name>substrate</name>
    </ligand>
</feature>
<feature type="binding site" evidence="1">
    <location>
        <position position="38"/>
    </location>
    <ligand>
        <name>Mg(2+)</name>
        <dbReference type="ChEBI" id="CHEBI:18420"/>
    </ligand>
</feature>
<feature type="binding site" evidence="1">
    <location>
        <position position="67"/>
    </location>
    <ligand>
        <name>Mg(2+)</name>
        <dbReference type="ChEBI" id="CHEBI:18420"/>
    </ligand>
</feature>
<feature type="binding site" evidence="1">
    <location>
        <position position="68"/>
    </location>
    <ligand>
        <name>substrate</name>
    </ligand>
</feature>
<feature type="binding site" evidence="1">
    <location>
        <begin position="146"/>
        <end position="149"/>
    </location>
    <ligand>
        <name>substrate</name>
    </ligand>
</feature>
<feature type="binding site" evidence="1">
    <location>
        <position position="169"/>
    </location>
    <ligand>
        <name>substrate</name>
    </ligand>
</feature>
<feature type="binding site" evidence="1">
    <location>
        <begin position="174"/>
        <end position="175"/>
    </location>
    <ligand>
        <name>substrate</name>
    </ligand>
</feature>
<name>IXTPA_PARMW</name>
<evidence type="ECO:0000255" key="1">
    <source>
        <dbReference type="HAMAP-Rule" id="MF_01405"/>
    </source>
</evidence>
<sequence>MRTLVIASGNAGKIREFQGLLQHLPLNVQAQPQGFDVEETGSTFAANARIKATAVAAMAGSWALADDSGLSVNALGGAPGVHSARYAPTDPERIEKLLGALSNASERHAQFCAALCVAAPDGSVLIEVEGRCDGWITTTPRGDGGFGYDPIFEVSCTGLTFAQMPLTEKKSHGHRGKAFALLEPQLQDLLSAEPR</sequence>
<protein>
    <recommendedName>
        <fullName evidence="1">dITP/XTP pyrophosphatase</fullName>
        <ecNumber evidence="1">3.6.1.66</ecNumber>
    </recommendedName>
    <alternativeName>
        <fullName evidence="1">Non-canonical purine NTP pyrophosphatase</fullName>
    </alternativeName>
    <alternativeName>
        <fullName evidence="1">Non-standard purine NTP pyrophosphatase</fullName>
    </alternativeName>
    <alternativeName>
        <fullName evidence="1">Nucleoside-triphosphate diphosphatase</fullName>
    </alternativeName>
    <alternativeName>
        <fullName evidence="1">Nucleoside-triphosphate pyrophosphatase</fullName>
        <shortName evidence="1">NTPase</shortName>
    </alternativeName>
</protein>
<accession>Q7U9M0</accession>
<organism>
    <name type="scientific">Parasynechococcus marenigrum (strain WH8102)</name>
    <dbReference type="NCBI Taxonomy" id="84588"/>
    <lineage>
        <taxon>Bacteria</taxon>
        <taxon>Bacillati</taxon>
        <taxon>Cyanobacteriota</taxon>
        <taxon>Cyanophyceae</taxon>
        <taxon>Synechococcales</taxon>
        <taxon>Prochlorococcaceae</taxon>
        <taxon>Parasynechococcus</taxon>
        <taxon>Parasynechococcus marenigrum</taxon>
    </lineage>
</organism>
<dbReference type="EC" id="3.6.1.66" evidence="1"/>
<dbReference type="EMBL" id="BX569689">
    <property type="protein sequence ID" value="CAE06749.1"/>
    <property type="molecule type" value="Genomic_DNA"/>
</dbReference>
<dbReference type="RefSeq" id="WP_011127110.1">
    <property type="nucleotide sequence ID" value="NC_005070.1"/>
</dbReference>
<dbReference type="SMR" id="Q7U9M0"/>
<dbReference type="STRING" id="84588.SYNW0234"/>
<dbReference type="KEGG" id="syw:SYNW0234"/>
<dbReference type="eggNOG" id="COG0127">
    <property type="taxonomic scope" value="Bacteria"/>
</dbReference>
<dbReference type="HOGENOM" id="CLU_082080_0_2_3"/>
<dbReference type="Proteomes" id="UP000001422">
    <property type="component" value="Chromosome"/>
</dbReference>
<dbReference type="GO" id="GO:0005829">
    <property type="term" value="C:cytosol"/>
    <property type="evidence" value="ECO:0007669"/>
    <property type="project" value="TreeGrafter"/>
</dbReference>
<dbReference type="GO" id="GO:0035870">
    <property type="term" value="F:dITP diphosphatase activity"/>
    <property type="evidence" value="ECO:0007669"/>
    <property type="project" value="RHEA"/>
</dbReference>
<dbReference type="GO" id="GO:0036220">
    <property type="term" value="F:ITP diphosphatase activity"/>
    <property type="evidence" value="ECO:0007669"/>
    <property type="project" value="UniProtKB-EC"/>
</dbReference>
<dbReference type="GO" id="GO:0046872">
    <property type="term" value="F:metal ion binding"/>
    <property type="evidence" value="ECO:0007669"/>
    <property type="project" value="UniProtKB-KW"/>
</dbReference>
<dbReference type="GO" id="GO:0000166">
    <property type="term" value="F:nucleotide binding"/>
    <property type="evidence" value="ECO:0007669"/>
    <property type="project" value="UniProtKB-KW"/>
</dbReference>
<dbReference type="GO" id="GO:0017111">
    <property type="term" value="F:ribonucleoside triphosphate phosphatase activity"/>
    <property type="evidence" value="ECO:0007669"/>
    <property type="project" value="InterPro"/>
</dbReference>
<dbReference type="GO" id="GO:0036222">
    <property type="term" value="F:XTP diphosphatase activity"/>
    <property type="evidence" value="ECO:0007669"/>
    <property type="project" value="RHEA"/>
</dbReference>
<dbReference type="GO" id="GO:0009117">
    <property type="term" value="P:nucleotide metabolic process"/>
    <property type="evidence" value="ECO:0007669"/>
    <property type="project" value="UniProtKB-KW"/>
</dbReference>
<dbReference type="GO" id="GO:0009146">
    <property type="term" value="P:purine nucleoside triphosphate catabolic process"/>
    <property type="evidence" value="ECO:0007669"/>
    <property type="project" value="UniProtKB-UniRule"/>
</dbReference>
<dbReference type="CDD" id="cd00515">
    <property type="entry name" value="HAM1"/>
    <property type="match status" value="1"/>
</dbReference>
<dbReference type="FunFam" id="3.90.950.10:FF:000001">
    <property type="entry name" value="dITP/XTP pyrophosphatase"/>
    <property type="match status" value="1"/>
</dbReference>
<dbReference type="Gene3D" id="3.90.950.10">
    <property type="match status" value="1"/>
</dbReference>
<dbReference type="HAMAP" id="MF_01405">
    <property type="entry name" value="Non_canon_purine_NTPase"/>
    <property type="match status" value="1"/>
</dbReference>
<dbReference type="InterPro" id="IPR020922">
    <property type="entry name" value="dITP/XTP_pyrophosphatase"/>
</dbReference>
<dbReference type="InterPro" id="IPR029001">
    <property type="entry name" value="ITPase-like_fam"/>
</dbReference>
<dbReference type="InterPro" id="IPR002637">
    <property type="entry name" value="RdgB/HAM1"/>
</dbReference>
<dbReference type="NCBIfam" id="TIGR00042">
    <property type="entry name" value="RdgB/HAM1 family non-canonical purine NTP pyrophosphatase"/>
    <property type="match status" value="1"/>
</dbReference>
<dbReference type="PANTHER" id="PTHR11067:SF9">
    <property type="entry name" value="INOSINE TRIPHOSPHATE PYROPHOSPHATASE"/>
    <property type="match status" value="1"/>
</dbReference>
<dbReference type="PANTHER" id="PTHR11067">
    <property type="entry name" value="INOSINE TRIPHOSPHATE PYROPHOSPHATASE/HAM1 PROTEIN"/>
    <property type="match status" value="1"/>
</dbReference>
<dbReference type="Pfam" id="PF01725">
    <property type="entry name" value="Ham1p_like"/>
    <property type="match status" value="1"/>
</dbReference>
<dbReference type="SUPFAM" id="SSF52972">
    <property type="entry name" value="ITPase-like"/>
    <property type="match status" value="1"/>
</dbReference>
<proteinExistence type="inferred from homology"/>
<keyword id="KW-0378">Hydrolase</keyword>
<keyword id="KW-0460">Magnesium</keyword>
<keyword id="KW-0479">Metal-binding</keyword>
<keyword id="KW-0546">Nucleotide metabolism</keyword>
<keyword id="KW-0547">Nucleotide-binding</keyword>
<reference key="1">
    <citation type="journal article" date="2003" name="Nature">
        <title>The genome of a motile marine Synechococcus.</title>
        <authorList>
            <person name="Palenik B."/>
            <person name="Brahamsha B."/>
            <person name="Larimer F.W."/>
            <person name="Land M.L."/>
            <person name="Hauser L."/>
            <person name="Chain P."/>
            <person name="Lamerdin J.E."/>
            <person name="Regala W."/>
            <person name="Allen E.E."/>
            <person name="McCarren J."/>
            <person name="Paulsen I.T."/>
            <person name="Dufresne A."/>
            <person name="Partensky F."/>
            <person name="Webb E.A."/>
            <person name="Waterbury J."/>
        </authorList>
    </citation>
    <scope>NUCLEOTIDE SEQUENCE [LARGE SCALE GENOMIC DNA]</scope>
    <source>
        <strain>WH8102</strain>
    </source>
</reference>
<gene>
    <name type="ordered locus">SYNW0234</name>
</gene>